<reference key="1">
    <citation type="journal article" date="2009" name="PLoS Genet.">
        <title>Organised genome dynamics in the Escherichia coli species results in highly diverse adaptive paths.</title>
        <authorList>
            <person name="Touchon M."/>
            <person name="Hoede C."/>
            <person name="Tenaillon O."/>
            <person name="Barbe V."/>
            <person name="Baeriswyl S."/>
            <person name="Bidet P."/>
            <person name="Bingen E."/>
            <person name="Bonacorsi S."/>
            <person name="Bouchier C."/>
            <person name="Bouvet O."/>
            <person name="Calteau A."/>
            <person name="Chiapello H."/>
            <person name="Clermont O."/>
            <person name="Cruveiller S."/>
            <person name="Danchin A."/>
            <person name="Diard M."/>
            <person name="Dossat C."/>
            <person name="Karoui M.E."/>
            <person name="Frapy E."/>
            <person name="Garry L."/>
            <person name="Ghigo J.M."/>
            <person name="Gilles A.M."/>
            <person name="Johnson J."/>
            <person name="Le Bouguenec C."/>
            <person name="Lescat M."/>
            <person name="Mangenot S."/>
            <person name="Martinez-Jehanne V."/>
            <person name="Matic I."/>
            <person name="Nassif X."/>
            <person name="Oztas S."/>
            <person name="Petit M.A."/>
            <person name="Pichon C."/>
            <person name="Rouy Z."/>
            <person name="Ruf C.S."/>
            <person name="Schneider D."/>
            <person name="Tourret J."/>
            <person name="Vacherie B."/>
            <person name="Vallenet D."/>
            <person name="Medigue C."/>
            <person name="Rocha E.P.C."/>
            <person name="Denamur E."/>
        </authorList>
    </citation>
    <scope>NUCLEOTIDE SEQUENCE [LARGE SCALE GENOMIC DNA]</scope>
    <source>
        <strain>IAI39 / ExPEC</strain>
    </source>
</reference>
<accession>B7NN20</accession>
<proteinExistence type="inferred from homology"/>
<keyword id="KW-1015">Disulfide bond</keyword>
<keyword id="KW-0574">Periplasm</keyword>
<keyword id="KW-0646">Protease inhibitor</keyword>
<keyword id="KW-0722">Serine protease inhibitor</keyword>
<keyword id="KW-0732">Signal</keyword>
<name>ECOT_ECO7I</name>
<comment type="function">
    <text evidence="1">General inhibitor of pancreatic serine proteases: inhibits chymotrypsin, trypsin, elastases, factor X, kallikrein as well as a variety of other proteases.</text>
</comment>
<comment type="subunit">
    <text evidence="1">Homodimer.</text>
</comment>
<comment type="subcellular location">
    <subcellularLocation>
        <location evidence="1">Periplasm</location>
    </subcellularLocation>
</comment>
<comment type="similarity">
    <text evidence="1">Belongs to the protease inhibitor I11 (ecotin) family.</text>
</comment>
<protein>
    <recommendedName>
        <fullName evidence="1">Ecotin</fullName>
    </recommendedName>
</protein>
<organism>
    <name type="scientific">Escherichia coli O7:K1 (strain IAI39 / ExPEC)</name>
    <dbReference type="NCBI Taxonomy" id="585057"/>
    <lineage>
        <taxon>Bacteria</taxon>
        <taxon>Pseudomonadati</taxon>
        <taxon>Pseudomonadota</taxon>
        <taxon>Gammaproteobacteria</taxon>
        <taxon>Enterobacterales</taxon>
        <taxon>Enterobacteriaceae</taxon>
        <taxon>Escherichia</taxon>
    </lineage>
</organism>
<sequence>MKTILPAVLFAAFATTSAWAAESVQPLEKIAPYPQAEKGMKRQVIQLTPQEDESTLKVELLIGQTLEVDCNLHRLGGKLESKTLEGWGYDYYVFDKVSSPVSTMMACPDGKKEKKFVTAYLGDAGMLRYNSKLPIVVYTPDNVDVKYRIWKAEEKIDNAVVR</sequence>
<gene>
    <name evidence="1" type="primary">eco</name>
    <name type="ordered locus">ECIAI39_2346</name>
</gene>
<feature type="signal peptide" evidence="1">
    <location>
        <begin position="1"/>
        <end position="20"/>
    </location>
</feature>
<feature type="chain" id="PRO_1000132357" description="Ecotin">
    <location>
        <begin position="21"/>
        <end position="162"/>
    </location>
</feature>
<feature type="site" description="Reactive bond" evidence="1">
    <location>
        <begin position="104"/>
        <end position="105"/>
    </location>
</feature>
<feature type="disulfide bond" evidence="1">
    <location>
        <begin position="70"/>
        <end position="107"/>
    </location>
</feature>
<evidence type="ECO:0000255" key="1">
    <source>
        <dbReference type="HAMAP-Rule" id="MF_00706"/>
    </source>
</evidence>
<dbReference type="EMBL" id="CU928164">
    <property type="protein sequence ID" value="CAR18472.1"/>
    <property type="molecule type" value="Genomic_DNA"/>
</dbReference>
<dbReference type="RefSeq" id="YP_002408306.1">
    <property type="nucleotide sequence ID" value="NC_011750.1"/>
</dbReference>
<dbReference type="SMR" id="B7NN20"/>
<dbReference type="STRING" id="585057.ECIAI39_2346"/>
<dbReference type="MEROPS" id="I11.001"/>
<dbReference type="KEGG" id="ect:ECIAI39_2346"/>
<dbReference type="PATRIC" id="fig|585057.6.peg.2446"/>
<dbReference type="HOGENOM" id="CLU_111565_0_0_6"/>
<dbReference type="Proteomes" id="UP000000749">
    <property type="component" value="Chromosome"/>
</dbReference>
<dbReference type="GO" id="GO:0042597">
    <property type="term" value="C:periplasmic space"/>
    <property type="evidence" value="ECO:0007669"/>
    <property type="project" value="UniProtKB-SubCell"/>
</dbReference>
<dbReference type="GO" id="GO:0004867">
    <property type="term" value="F:serine-type endopeptidase inhibitor activity"/>
    <property type="evidence" value="ECO:0007669"/>
    <property type="project" value="UniProtKB-UniRule"/>
</dbReference>
<dbReference type="CDD" id="cd00242">
    <property type="entry name" value="Ecotin"/>
    <property type="match status" value="1"/>
</dbReference>
<dbReference type="FunFam" id="2.60.40.550:FF:000001">
    <property type="entry name" value="Ecotin"/>
    <property type="match status" value="1"/>
</dbReference>
<dbReference type="FunFam" id="4.10.1230.10:FF:000001">
    <property type="entry name" value="Ecotin"/>
    <property type="match status" value="1"/>
</dbReference>
<dbReference type="Gene3D" id="2.60.40.550">
    <property type="entry name" value="Ecotin"/>
    <property type="match status" value="1"/>
</dbReference>
<dbReference type="Gene3D" id="4.10.1230.10">
    <property type="entry name" value="Ecotin, trypsin inhibitor"/>
    <property type="match status" value="1"/>
</dbReference>
<dbReference type="HAMAP" id="MF_00706">
    <property type="entry name" value="Ecotin"/>
    <property type="match status" value="1"/>
</dbReference>
<dbReference type="InterPro" id="IPR027438">
    <property type="entry name" value="Ecotin_C"/>
</dbReference>
<dbReference type="InterPro" id="IPR036198">
    <property type="entry name" value="Ecotin_sf"/>
</dbReference>
<dbReference type="InterPro" id="IPR005658">
    <property type="entry name" value="Prot_inh_ecotin"/>
</dbReference>
<dbReference type="InterPro" id="IPR023084">
    <property type="entry name" value="Prot_inh_ecotin_gammaproteobac"/>
</dbReference>
<dbReference type="NCBIfam" id="NF002987">
    <property type="entry name" value="PRK03719.1"/>
    <property type="match status" value="1"/>
</dbReference>
<dbReference type="PANTHER" id="PTHR35890">
    <property type="match status" value="1"/>
</dbReference>
<dbReference type="PANTHER" id="PTHR35890:SF3">
    <property type="entry name" value="ECOTIN"/>
    <property type="match status" value="1"/>
</dbReference>
<dbReference type="Pfam" id="PF03974">
    <property type="entry name" value="Ecotin"/>
    <property type="match status" value="1"/>
</dbReference>
<dbReference type="PIRSF" id="PIRSF006865">
    <property type="entry name" value="Prot_inh_ecotin"/>
    <property type="match status" value="1"/>
</dbReference>
<dbReference type="SUPFAM" id="SSF49772">
    <property type="entry name" value="Ecotin, trypsin inhibitor"/>
    <property type="match status" value="1"/>
</dbReference>